<organism>
    <name type="scientific">Encephalitozoon cuniculi (strain GB-M1)</name>
    <name type="common">Microsporidian parasite</name>
    <dbReference type="NCBI Taxonomy" id="284813"/>
    <lineage>
        <taxon>Eukaryota</taxon>
        <taxon>Fungi</taxon>
        <taxon>Fungi incertae sedis</taxon>
        <taxon>Microsporidia</taxon>
        <taxon>Unikaryonidae</taxon>
        <taxon>Encephalitozoon</taxon>
    </lineage>
</organism>
<accession>Q95ZE3</accession>
<feature type="chain" id="PRO_0000090721" description="Phosphatidate cytidylyltransferase">
    <location>
        <begin position="1"/>
        <end position="393"/>
    </location>
</feature>
<feature type="transmembrane region" description="Helical" evidence="1">
    <location>
        <begin position="49"/>
        <end position="69"/>
    </location>
</feature>
<feature type="transmembrane region" description="Helical" evidence="1">
    <location>
        <begin position="73"/>
        <end position="93"/>
    </location>
</feature>
<feature type="transmembrane region" description="Helical" evidence="1">
    <location>
        <begin position="108"/>
        <end position="128"/>
    </location>
</feature>
<feature type="transmembrane region" description="Helical" evidence="1">
    <location>
        <begin position="141"/>
        <end position="161"/>
    </location>
</feature>
<feature type="transmembrane region" description="Helical" evidence="1">
    <location>
        <begin position="171"/>
        <end position="191"/>
    </location>
</feature>
<feature type="transmembrane region" description="Helical" evidence="1">
    <location>
        <begin position="198"/>
        <end position="218"/>
    </location>
</feature>
<feature type="transmembrane region" description="Helical" evidence="1">
    <location>
        <begin position="237"/>
        <end position="257"/>
    </location>
</feature>
<feature type="transmembrane region" description="Helical" evidence="1">
    <location>
        <begin position="290"/>
        <end position="310"/>
    </location>
</feature>
<protein>
    <recommendedName>
        <fullName>Phosphatidate cytidylyltransferase</fullName>
        <ecNumber>2.7.7.41</ecNumber>
    </recommendedName>
    <alternativeName>
        <fullName>CDP-DAG synthase</fullName>
    </alternativeName>
    <alternativeName>
        <fullName>CDP-DG synthase</fullName>
    </alternativeName>
    <alternativeName>
        <fullName>CDP-diacylglycerol synthase</fullName>
        <shortName>CDS</shortName>
    </alternativeName>
    <alternativeName>
        <fullName>CDP-diglyceride pyrophosphorylase</fullName>
    </alternativeName>
    <alternativeName>
        <fullName>CDP-diglyceride synthase</fullName>
    </alternativeName>
    <alternativeName>
        <fullName>CTP:phosphatidate cytidylyltransferase</fullName>
    </alternativeName>
</protein>
<dbReference type="EC" id="2.7.7.41"/>
<dbReference type="EMBL" id="AJ310088">
    <property type="protein sequence ID" value="CAC51023.1"/>
    <property type="molecule type" value="Genomic_DNA"/>
</dbReference>
<dbReference type="EMBL" id="AL590445">
    <property type="protein sequence ID" value="CAD26645.1"/>
    <property type="molecule type" value="Genomic_DNA"/>
</dbReference>
<dbReference type="RefSeq" id="NP_597468.1">
    <property type="nucleotide sequence ID" value="NM_001041334.1"/>
</dbReference>
<dbReference type="FunCoup" id="Q95ZE3">
    <property type="interactions" value="147"/>
</dbReference>
<dbReference type="STRING" id="284813.Q95ZE3"/>
<dbReference type="GeneID" id="859134"/>
<dbReference type="KEGG" id="ecu:ECU05_1250"/>
<dbReference type="VEuPathDB" id="MicrosporidiaDB:ECU05_1250"/>
<dbReference type="HOGENOM" id="CLU_023471_1_2_1"/>
<dbReference type="InParanoid" id="Q95ZE3"/>
<dbReference type="OMA" id="FFAYMYF"/>
<dbReference type="OrthoDB" id="10260889at2759"/>
<dbReference type="UniPathway" id="UPA00557">
    <property type="reaction ID" value="UER00614"/>
</dbReference>
<dbReference type="Proteomes" id="UP000000819">
    <property type="component" value="Chromosome V"/>
</dbReference>
<dbReference type="GO" id="GO:0005789">
    <property type="term" value="C:endoplasmic reticulum membrane"/>
    <property type="evidence" value="ECO:0007669"/>
    <property type="project" value="TreeGrafter"/>
</dbReference>
<dbReference type="GO" id="GO:0004605">
    <property type="term" value="F:phosphatidate cytidylyltransferase activity"/>
    <property type="evidence" value="ECO:0007669"/>
    <property type="project" value="UniProtKB-EC"/>
</dbReference>
<dbReference type="GO" id="GO:0016024">
    <property type="term" value="P:CDP-diacylglycerol biosynthetic process"/>
    <property type="evidence" value="ECO:0007669"/>
    <property type="project" value="UniProtKB-UniPathway"/>
</dbReference>
<dbReference type="InterPro" id="IPR000374">
    <property type="entry name" value="PC_trans"/>
</dbReference>
<dbReference type="InterPro" id="IPR016720">
    <property type="entry name" value="PC_Trfase_euk"/>
</dbReference>
<dbReference type="PANTHER" id="PTHR13773">
    <property type="entry name" value="PHOSPHATIDATE CYTIDYLYLTRANSFERASE"/>
    <property type="match status" value="1"/>
</dbReference>
<dbReference type="PANTHER" id="PTHR13773:SF8">
    <property type="entry name" value="PHOSPHATIDATE CYTIDYLYLTRANSFERASE, PHOTORECEPTOR-SPECIFIC"/>
    <property type="match status" value="1"/>
</dbReference>
<dbReference type="Pfam" id="PF01148">
    <property type="entry name" value="CTP_transf_1"/>
    <property type="match status" value="1"/>
</dbReference>
<dbReference type="PIRSF" id="PIRSF018269">
    <property type="entry name" value="PC_trans_euk"/>
    <property type="match status" value="1"/>
</dbReference>
<dbReference type="PROSITE" id="PS01315">
    <property type="entry name" value="CDS"/>
    <property type="match status" value="1"/>
</dbReference>
<name>CDS1_ENCCU</name>
<evidence type="ECO:0000255" key="1"/>
<evidence type="ECO:0000305" key="2"/>
<keyword id="KW-0444">Lipid biosynthesis</keyword>
<keyword id="KW-0443">Lipid metabolism</keyword>
<keyword id="KW-0472">Membrane</keyword>
<keyword id="KW-0548">Nucleotidyltransferase</keyword>
<keyword id="KW-0594">Phospholipid biosynthesis</keyword>
<keyword id="KW-1208">Phospholipid metabolism</keyword>
<keyword id="KW-1185">Reference proteome</keyword>
<keyword id="KW-0808">Transferase</keyword>
<keyword id="KW-0812">Transmembrane</keyword>
<keyword id="KW-1133">Transmembrane helix</keyword>
<comment type="catalytic activity">
    <reaction>
        <text>a 1,2-diacyl-sn-glycero-3-phosphate + CTP + H(+) = a CDP-1,2-diacyl-sn-glycerol + diphosphate</text>
        <dbReference type="Rhea" id="RHEA:16229"/>
        <dbReference type="ChEBI" id="CHEBI:15378"/>
        <dbReference type="ChEBI" id="CHEBI:33019"/>
        <dbReference type="ChEBI" id="CHEBI:37563"/>
        <dbReference type="ChEBI" id="CHEBI:58332"/>
        <dbReference type="ChEBI" id="CHEBI:58608"/>
        <dbReference type="EC" id="2.7.7.41"/>
    </reaction>
</comment>
<comment type="pathway">
    <text>Phospholipid metabolism; CDP-diacylglycerol biosynthesis; CDP-diacylglycerol from sn-glycerol 3-phosphate: step 3/3.</text>
</comment>
<comment type="subcellular location">
    <subcellularLocation>
        <location evidence="2">Membrane</location>
        <topology evidence="2">Multi-pass membrane protein</topology>
    </subcellularLocation>
</comment>
<comment type="similarity">
    <text evidence="2">Belongs to the CDS family.</text>
</comment>
<sequence length="393" mass="44467">MAEERKDSEESPGTYSCSKTLRRRGEITPNGKVRYETTQNKAAGITKTNFFRRLVLSIVMISGFCWISVNDKIYSFGLIIFLTISIIREIIGITRKSDGRPFHLRTSIILGLAVPIYSYLVFPSIMMMYFSRVSKCFLRRLSFVCFYSYVAAFMCFVASLRKGRLKPQLGLFALIHLSTYTMAIAAKCAIFNLNKGRFWFVFPALLVISNDISAYVVGKSIGKRPLYRLSPKKTLEGFIGAFIFTTAVGFALGHLHVNSGFLRDADSEQFQKFMKFTVFGANVRVQSIYIHIIPFIFVASFVAPFSGFLASALKRAYKKKDFGEAISGHGGIADRMDCQVLIAIFASTYISSFIYTEERSVGSVFSLICRNFSHDEIMILIEMLNRRVESIRK</sequence>
<reference key="1">
    <citation type="journal article" date="2001" name="Exp. Parasitol.">
        <title>Encephalitozoon cuniculi (Microspora): characterization of phospholipid metabolic pathway potentially linked to therapeutics.</title>
        <authorList>
            <person name="El Alaoui H."/>
            <person name="Bata J."/>
            <person name="Peyret P."/>
            <person name="Vivares C.P."/>
        </authorList>
    </citation>
    <scope>NUCLEOTIDE SEQUENCE [GENOMIC DNA]</scope>
</reference>
<reference key="2">
    <citation type="journal article" date="2001" name="Nature">
        <title>Genome sequence and gene compaction of the eukaryote parasite Encephalitozoon cuniculi.</title>
        <authorList>
            <person name="Katinka M.D."/>
            <person name="Duprat S."/>
            <person name="Cornillot E."/>
            <person name="Metenier G."/>
            <person name="Thomarat F."/>
            <person name="Prensier G."/>
            <person name="Barbe V."/>
            <person name="Peyretaillade E."/>
            <person name="Brottier P."/>
            <person name="Wincker P."/>
            <person name="Delbac F."/>
            <person name="El Alaoui H."/>
            <person name="Peyret P."/>
            <person name="Saurin W."/>
            <person name="Gouy M."/>
            <person name="Weissenbach J."/>
            <person name="Vivares C.P."/>
        </authorList>
    </citation>
    <scope>NUCLEOTIDE SEQUENCE [LARGE SCALE GENOMIC DNA]</scope>
    <source>
        <strain>GB-M1</strain>
    </source>
</reference>
<proteinExistence type="inferred from homology"/>
<gene>
    <name type="primary">CDS1</name>
    <name type="ordered locus">ECU05_1250</name>
</gene>